<accession>P23293</accession>
<accession>D6W4G2</accession>
<proteinExistence type="evidence at protein level"/>
<comment type="function">
    <text evidence="4 5 6 7 10 11 12 13">Serine/threonine-protein kinase component of the BUR kinase complex involved in transcription regulation. This complex phosphorylates 'Ser-120' of the UBC2/RAD6 ubiquitin-conjugating enzyme (E2), leading to monoubiquitination of histone H2B, the localization of the PAF1 complex to the chromatin, and the silencing of telomeric-associated genes. Also required for histone H3 'Lys-4' trimethylation. May phosphorylate the 'Ser-5' of the RBP1 carboxy-terminal domain (CTD) repeats. Necessary for the recovery from pheromone-induced growth arrest in the cell cycle G1 phase. The kinase activity of the complex requires the presence of BUR2.</text>
</comment>
<comment type="catalytic activity">
    <reaction evidence="5 15">
        <text>L-seryl-[protein] + ATP = O-phospho-L-seryl-[protein] + ADP + H(+)</text>
        <dbReference type="Rhea" id="RHEA:17989"/>
        <dbReference type="Rhea" id="RHEA-COMP:9863"/>
        <dbReference type="Rhea" id="RHEA-COMP:11604"/>
        <dbReference type="ChEBI" id="CHEBI:15378"/>
        <dbReference type="ChEBI" id="CHEBI:29999"/>
        <dbReference type="ChEBI" id="CHEBI:30616"/>
        <dbReference type="ChEBI" id="CHEBI:83421"/>
        <dbReference type="ChEBI" id="CHEBI:456216"/>
        <dbReference type="EC" id="2.7.11.22"/>
    </reaction>
    <physiologicalReaction direction="left-to-right" evidence="15 16">
        <dbReference type="Rhea" id="RHEA:17990"/>
    </physiologicalReaction>
</comment>
<comment type="catalytic activity">
    <reaction evidence="15">
        <text>L-threonyl-[protein] + ATP = O-phospho-L-threonyl-[protein] + ADP + H(+)</text>
        <dbReference type="Rhea" id="RHEA:46608"/>
        <dbReference type="Rhea" id="RHEA-COMP:11060"/>
        <dbReference type="Rhea" id="RHEA-COMP:11605"/>
        <dbReference type="ChEBI" id="CHEBI:15378"/>
        <dbReference type="ChEBI" id="CHEBI:30013"/>
        <dbReference type="ChEBI" id="CHEBI:30616"/>
        <dbReference type="ChEBI" id="CHEBI:61977"/>
        <dbReference type="ChEBI" id="CHEBI:456216"/>
        <dbReference type="EC" id="2.7.11.22"/>
    </reaction>
    <physiologicalReaction direction="left-to-right" evidence="15">
        <dbReference type="Rhea" id="RHEA:46609"/>
    </physiologicalReaction>
</comment>
<comment type="catalytic activity">
    <reaction evidence="5">
        <text>[DNA-directed RNA polymerase] + ATP = phospho-[DNA-directed RNA polymerase] + ADP + H(+)</text>
        <dbReference type="Rhea" id="RHEA:10216"/>
        <dbReference type="Rhea" id="RHEA-COMP:11321"/>
        <dbReference type="Rhea" id="RHEA-COMP:11322"/>
        <dbReference type="ChEBI" id="CHEBI:15378"/>
        <dbReference type="ChEBI" id="CHEBI:30616"/>
        <dbReference type="ChEBI" id="CHEBI:43176"/>
        <dbReference type="ChEBI" id="CHEBI:68546"/>
        <dbReference type="ChEBI" id="CHEBI:456216"/>
        <dbReference type="EC" id="2.7.11.23"/>
    </reaction>
    <physiologicalReaction direction="left-to-right" evidence="16">
        <dbReference type="Rhea" id="RHEA:10217"/>
    </physiologicalReaction>
</comment>
<comment type="subunit">
    <text evidence="4 5">Belongs to the BUR kinase complex composed of SGV1/BUR1 and BUR2. Interacts with BUR2 and RBP1.</text>
</comment>
<comment type="interaction">
    <interactant intactId="EBI-17078">
        <id>P23293</id>
    </interactant>
    <interactant intactId="EBI-30948">
        <id>Q05949</id>
        <label>BUR2</label>
    </interactant>
    <organismsDiffer>false</organismsDiffer>
    <experiments>7</experiments>
</comment>
<comment type="subcellular location">
    <subcellularLocation>
        <location evidence="8">Nucleus</location>
    </subcellularLocation>
</comment>
<comment type="miscellaneous">
    <text evidence="9">Present with 2070 molecules/cell in log phase SD medium.</text>
</comment>
<comment type="similarity">
    <text evidence="14">Belongs to the protein kinase superfamily. CMGC Ser/Thr protein kinase family. CDC2/CDKX subfamily.</text>
</comment>
<name>BUR1_YEAST</name>
<organism>
    <name type="scientific">Saccharomyces cerevisiae (strain ATCC 204508 / S288c)</name>
    <name type="common">Baker's yeast</name>
    <dbReference type="NCBI Taxonomy" id="559292"/>
    <lineage>
        <taxon>Eukaryota</taxon>
        <taxon>Fungi</taxon>
        <taxon>Dikarya</taxon>
        <taxon>Ascomycota</taxon>
        <taxon>Saccharomycotina</taxon>
        <taxon>Saccharomycetes</taxon>
        <taxon>Saccharomycetales</taxon>
        <taxon>Saccharomycetaceae</taxon>
        <taxon>Saccharomyces</taxon>
    </lineage>
</organism>
<sequence>MSDNGSPAVLPKTEFNKYKIGKVKSTPAIQRDAKTNLTYIKLRKRSSEKVYGCTVFQNHYREDEKLGQGTFGEVYKGIHLETQRQVAMKKIIVSVEKDLFPITAQREITILKRLNHKNIIKLIEMVYDHSPDITNAASSNLHKSFYMILPYMVADLSGVLHNPRINLEMCDIKNMMLQILEGLNYIHCAKFMHRDIKTANILIDHNGVLKLADFGLARLYYGCPPNLKYPGGAGSGAKYTSVVVTRWYRAPELVLGDKQYTTAVDIWGVGCVFAEFFEKKPILQGKTDIDQGHVIFKLLGTPTEEDWAVARYLPGAELTTTNYKPTLRERFGKYLSETGLDFLGQLLALDPYKRLTAMSAKHHPWFKEDPLPSEKITLPTEESHEADIKRYKEEMHQSLSQRVPTAPRGHIVEKGESPVVKNLGAIPRGPKKDDASFLPPSKNVLAKPPPSKIRELHQNPRPYHVNSGYAKTAIPPPAAPAGVNRYGPNNSSRNNRFSGNSTAPNNSRNPVNRFHPETNVSSKYNKVPLPLGPQSRYQGNSNESRYKNSPNDSRYHNPRYVNKPETNFNRQPQKYSRQESNAPINKNYNPSNGSRNMAGDHHQGSRPSHPQFPISPSQGQHQLTSKPIEKKNGSFKDERAKPDESKEFQNSDIADLY</sequence>
<evidence type="ECO:0000255" key="1">
    <source>
        <dbReference type="PROSITE-ProRule" id="PRU00159"/>
    </source>
</evidence>
<evidence type="ECO:0000255" key="2">
    <source>
        <dbReference type="PROSITE-ProRule" id="PRU10027"/>
    </source>
</evidence>
<evidence type="ECO:0000256" key="3">
    <source>
        <dbReference type="SAM" id="MobiDB-lite"/>
    </source>
</evidence>
<evidence type="ECO:0000269" key="4">
    <source>
    </source>
</evidence>
<evidence type="ECO:0000269" key="5">
    <source>
    </source>
</evidence>
<evidence type="ECO:0000269" key="6">
    <source>
    </source>
</evidence>
<evidence type="ECO:0000269" key="7">
    <source>
    </source>
</evidence>
<evidence type="ECO:0000269" key="8">
    <source>
    </source>
</evidence>
<evidence type="ECO:0000269" key="9">
    <source>
    </source>
</evidence>
<evidence type="ECO:0000269" key="10">
    <source>
    </source>
</evidence>
<evidence type="ECO:0000269" key="11">
    <source>
    </source>
</evidence>
<evidence type="ECO:0000269" key="12">
    <source>
    </source>
</evidence>
<evidence type="ECO:0000269" key="13">
    <source>
    </source>
</evidence>
<evidence type="ECO:0000305" key="14"/>
<evidence type="ECO:0000305" key="15">
    <source>
    </source>
</evidence>
<evidence type="ECO:0000305" key="16">
    <source>
    </source>
</evidence>
<evidence type="ECO:0007744" key="17">
    <source>
    </source>
</evidence>
<evidence type="ECO:0007744" key="18">
    <source>
    </source>
</evidence>
<evidence type="ECO:0007744" key="19">
    <source>
    </source>
</evidence>
<evidence type="ECO:0007744" key="20">
    <source>
    </source>
</evidence>
<reference key="1">
    <citation type="journal article" date="1991" name="Cell">
        <title>SGV1 encodes a CDC28/cdc2-related kinase required for a G alpha subunit-mediated adaptive response to pheromone in S. cerevisiae.</title>
        <authorList>
            <person name="Irie K."/>
            <person name="Nomoto S."/>
            <person name="Miyajima I."/>
            <person name="Matsumoto K."/>
        </authorList>
    </citation>
    <scope>NUCLEOTIDE SEQUENCE [GENOMIC DNA]</scope>
    <scope>FUNCTION</scope>
    <source>
        <strain>ATCC 204508 / S288c</strain>
    </source>
</reference>
<reference key="2">
    <citation type="journal article" date="1994" name="Yeast">
        <title>DNA sequence analysis of a 10.4 kbp region on the right arm of yeast chromosome XVI positions GPH1 and SGV1 adjacent to KRE6, and identifies two novel tRNA genes.</title>
        <authorList>
            <person name="Roemer T.D."/>
            <person name="Fortin N."/>
            <person name="Bussey H."/>
        </authorList>
    </citation>
    <scope>NUCLEOTIDE SEQUENCE [GENOMIC DNA]</scope>
</reference>
<reference key="3">
    <citation type="journal article" date="1997" name="Nature">
        <title>The nucleotide sequence of Saccharomyces cerevisiae chromosome XVI.</title>
        <authorList>
            <person name="Bussey H."/>
            <person name="Storms R.K."/>
            <person name="Ahmed A."/>
            <person name="Albermann K."/>
            <person name="Allen E."/>
            <person name="Ansorge W."/>
            <person name="Araujo R."/>
            <person name="Aparicio A."/>
            <person name="Barrell B.G."/>
            <person name="Badcock K."/>
            <person name="Benes V."/>
            <person name="Botstein D."/>
            <person name="Bowman S."/>
            <person name="Brueckner M."/>
            <person name="Carpenter J."/>
            <person name="Cherry J.M."/>
            <person name="Chung E."/>
            <person name="Churcher C.M."/>
            <person name="Coster F."/>
            <person name="Davis K."/>
            <person name="Davis R.W."/>
            <person name="Dietrich F.S."/>
            <person name="Delius H."/>
            <person name="DiPaolo T."/>
            <person name="Dubois E."/>
            <person name="Duesterhoeft A."/>
            <person name="Duncan M."/>
            <person name="Floeth M."/>
            <person name="Fortin N."/>
            <person name="Friesen J.D."/>
            <person name="Fritz C."/>
            <person name="Goffeau A."/>
            <person name="Hall J."/>
            <person name="Hebling U."/>
            <person name="Heumann K."/>
            <person name="Hilbert H."/>
            <person name="Hillier L.W."/>
            <person name="Hunicke-Smith S."/>
            <person name="Hyman R.W."/>
            <person name="Johnston M."/>
            <person name="Kalman S."/>
            <person name="Kleine K."/>
            <person name="Komp C."/>
            <person name="Kurdi O."/>
            <person name="Lashkari D."/>
            <person name="Lew H."/>
            <person name="Lin A."/>
            <person name="Lin D."/>
            <person name="Louis E.J."/>
            <person name="Marathe R."/>
            <person name="Messenguy F."/>
            <person name="Mewes H.-W."/>
            <person name="Mirtipati S."/>
            <person name="Moestl D."/>
            <person name="Mueller-Auer S."/>
            <person name="Namath A."/>
            <person name="Nentwich U."/>
            <person name="Oefner P."/>
            <person name="Pearson D."/>
            <person name="Petel F.X."/>
            <person name="Pohl T.M."/>
            <person name="Purnelle B."/>
            <person name="Rajandream M.A."/>
            <person name="Rechmann S."/>
            <person name="Rieger M."/>
            <person name="Riles L."/>
            <person name="Roberts D."/>
            <person name="Schaefer M."/>
            <person name="Scharfe M."/>
            <person name="Scherens B."/>
            <person name="Schramm S."/>
            <person name="Schroeder M."/>
            <person name="Sdicu A.-M."/>
            <person name="Tettelin H."/>
            <person name="Urrestarazu L.A."/>
            <person name="Ushinsky S."/>
            <person name="Vierendeels F."/>
            <person name="Vissers S."/>
            <person name="Voss H."/>
            <person name="Walsh S.V."/>
            <person name="Wambutt R."/>
            <person name="Wang Y."/>
            <person name="Wedler E."/>
            <person name="Wedler H."/>
            <person name="Winnett E."/>
            <person name="Zhong W.-W."/>
            <person name="Zollner A."/>
            <person name="Vo D.H."/>
            <person name="Hani J."/>
        </authorList>
    </citation>
    <scope>NUCLEOTIDE SEQUENCE [LARGE SCALE GENOMIC DNA]</scope>
    <source>
        <strain>ATCC 204508 / S288c</strain>
    </source>
</reference>
<reference key="4">
    <citation type="journal article" date="2014" name="G3 (Bethesda)">
        <title>The reference genome sequence of Saccharomyces cerevisiae: Then and now.</title>
        <authorList>
            <person name="Engel S.R."/>
            <person name="Dietrich F.S."/>
            <person name="Fisk D.G."/>
            <person name="Binkley G."/>
            <person name="Balakrishnan R."/>
            <person name="Costanzo M.C."/>
            <person name="Dwight S.S."/>
            <person name="Hitz B.C."/>
            <person name="Karra K."/>
            <person name="Nash R.S."/>
            <person name="Weng S."/>
            <person name="Wong E.D."/>
            <person name="Lloyd P."/>
            <person name="Skrzypek M.S."/>
            <person name="Miyasato S.R."/>
            <person name="Simison M."/>
            <person name="Cherry J.M."/>
        </authorList>
    </citation>
    <scope>GENOME REANNOTATION</scope>
    <source>
        <strain>ATCC 204508 / S288c</strain>
    </source>
</reference>
<reference key="5">
    <citation type="journal article" date="1993" name="Genetics">
        <title>Mutations that suppress the deletion of an upstream activating sequence in yeast: involvement of a protein kinase and histone H3 in repressing transcription in vivo.</title>
        <authorList>
            <person name="Prelich G."/>
            <person name="Winston F."/>
        </authorList>
    </citation>
    <scope>FUNCTION</scope>
</reference>
<reference key="6">
    <citation type="journal article" date="2000" name="Mol. Cell. Biol.">
        <title>BUR1 and BUR2 encode a divergent cyclin-dependent kinase-cyclin complex important for transcription in vivo.</title>
        <authorList>
            <person name="Yao S."/>
            <person name="Neiman A."/>
            <person name="Prelich G."/>
        </authorList>
    </citation>
    <scope>INTERACTION WITH BUR2</scope>
    <scope>FUNCTION</scope>
    <scope>CATALYTIC ACTIVITY</scope>
</reference>
<reference key="7">
    <citation type="journal article" date="2001" name="Mol. Cell. Biol.">
        <title>Phosphorylation of the RNA polymerase II carboxy-terminal domain by the Bur1 cyclin-dependent kinase.</title>
        <authorList>
            <person name="Murray S."/>
            <person name="Udupa R."/>
            <person name="Yao S."/>
            <person name="Hartzog G."/>
            <person name="Prelich G."/>
        </authorList>
    </citation>
    <scope>INTERACTION WITH RBP1</scope>
    <scope>FUNCTION</scope>
    <scope>CATALYTIC ACTIVITY</scope>
</reference>
<reference key="8">
    <citation type="journal article" date="2002" name="Mol. Cell. Biol.">
        <title>Activation of the Bur1-Bur2 cyclin-dependent kinase complex by Cak1.</title>
        <authorList>
            <person name="Yao S."/>
            <person name="Prelich G."/>
        </authorList>
    </citation>
    <scope>PHOSPHORYLATION AT THR-240</scope>
    <scope>MUTAGENESIS OF THR-240</scope>
    <scope>FUNCTION</scope>
</reference>
<reference key="9">
    <citation type="journal article" date="2003" name="Mol. Cell. Biol.">
        <title>Bur1 kinase is required for efficient transcription elongation by RNA polymerase II.</title>
        <authorList>
            <person name="Keogh M.-C."/>
            <person name="Podolny V."/>
            <person name="Buratowski S."/>
        </authorList>
    </citation>
    <scope>FUNCTION</scope>
    <scope>MUTAGENESIS OF GLU-107; ASP-213 AND THR-240</scope>
</reference>
<reference key="10">
    <citation type="journal article" date="2003" name="Nature">
        <title>Global analysis of protein localization in budding yeast.</title>
        <authorList>
            <person name="Huh W.-K."/>
            <person name="Falvo J.V."/>
            <person name="Gerke L.C."/>
            <person name="Carroll A.S."/>
            <person name="Howson R.W."/>
            <person name="Weissman J.S."/>
            <person name="O'Shea E.K."/>
        </authorList>
    </citation>
    <scope>SUBCELLULAR LOCATION [LARGE SCALE ANALYSIS]</scope>
</reference>
<reference key="11">
    <citation type="journal article" date="2003" name="Nature">
        <title>Global analysis of protein expression in yeast.</title>
        <authorList>
            <person name="Ghaemmaghami S."/>
            <person name="Huh W.-K."/>
            <person name="Bower K."/>
            <person name="Howson R.W."/>
            <person name="Belle A."/>
            <person name="Dephoure N."/>
            <person name="O'Shea E.K."/>
            <person name="Weissman J.S."/>
        </authorList>
    </citation>
    <scope>LEVEL OF PROTEIN EXPRESSION [LARGE SCALE ANALYSIS]</scope>
</reference>
<reference key="12">
    <citation type="journal article" date="2005" name="Curr. Biol.">
        <title>BUR kinase selectively regulates H3 K4 trimethylation and H2B ubiquitylation through recruitment of the PAF elongation complex.</title>
        <authorList>
            <person name="Laribee R.N."/>
            <person name="Krogan N.J."/>
            <person name="Xiao T."/>
            <person name="Shibata Y."/>
            <person name="Hughes T.R."/>
            <person name="Greenblatt J.F."/>
            <person name="Strahl B.D."/>
        </authorList>
    </citation>
    <scope>FUNCTION</scope>
</reference>
<reference key="13">
    <citation type="journal article" date="2005" name="Mol. Cell">
        <title>The Bur1/Bur2 complex is required for histone H2B monoubiquitination by Rad6/Bre1 and histone methylation by COMPASS.</title>
        <authorList>
            <person name="Wood A."/>
            <person name="Schneider J."/>
            <person name="Dover J."/>
            <person name="Johnston M."/>
            <person name="Shilatifard A."/>
        </authorList>
    </citation>
    <scope>FUNCTION IN PHOSPHORYLATION OF UBC2</scope>
</reference>
<reference key="14">
    <citation type="journal article" date="2005" name="Mol. Cell. Proteomics">
        <title>Quantitative phosphoproteomics applied to the yeast pheromone signaling pathway.</title>
        <authorList>
            <person name="Gruhler A."/>
            <person name="Olsen J.V."/>
            <person name="Mohammed S."/>
            <person name="Mortensen P."/>
            <person name="Faergeman N.J."/>
            <person name="Mann M."/>
            <person name="Jensen O.N."/>
        </authorList>
    </citation>
    <scope>IDENTIFICATION BY MASS SPECTROMETRY [LARGE SCALE ANALYSIS]</scope>
    <source>
        <strain>YAL6B</strain>
    </source>
</reference>
<reference key="15">
    <citation type="journal article" date="2007" name="J. Proteome Res.">
        <title>Large-scale phosphorylation analysis of alpha-factor-arrested Saccharomyces cerevisiae.</title>
        <authorList>
            <person name="Li X."/>
            <person name="Gerber S.A."/>
            <person name="Rudner A.D."/>
            <person name="Beausoleil S.A."/>
            <person name="Haas W."/>
            <person name="Villen J."/>
            <person name="Elias J.E."/>
            <person name="Gygi S.P."/>
        </authorList>
    </citation>
    <scope>PHOSPHORYLATION [LARGE SCALE ANALYSIS] AT SER-417</scope>
    <scope>IDENTIFICATION BY MASS SPECTROMETRY [LARGE SCALE ANALYSIS]</scope>
    <source>
        <strain>ADR376</strain>
    </source>
</reference>
<reference key="16">
    <citation type="journal article" date="2007" name="Proc. Natl. Acad. Sci. U.S.A.">
        <title>Analysis of phosphorylation sites on proteins from Saccharomyces cerevisiae by electron transfer dissociation (ETD) mass spectrometry.</title>
        <authorList>
            <person name="Chi A."/>
            <person name="Huttenhower C."/>
            <person name="Geer L.Y."/>
            <person name="Coon J.J."/>
            <person name="Syka J.E.P."/>
            <person name="Bai D.L."/>
            <person name="Shabanowitz J."/>
            <person name="Burke D.J."/>
            <person name="Troyanskaya O.G."/>
            <person name="Hunt D.F."/>
        </authorList>
    </citation>
    <scope>PHOSPHORYLATION [LARGE SCALE ANALYSIS] AT SER-400 AND THR-405</scope>
    <scope>IDENTIFICATION BY MASS SPECTROMETRY [LARGE SCALE ANALYSIS]</scope>
</reference>
<reference key="17">
    <citation type="journal article" date="2008" name="Mol. Cell. Proteomics">
        <title>A multidimensional chromatography technology for in-depth phosphoproteome analysis.</title>
        <authorList>
            <person name="Albuquerque C.P."/>
            <person name="Smolka M.B."/>
            <person name="Payne S.H."/>
            <person name="Bafna V."/>
            <person name="Eng J."/>
            <person name="Zhou H."/>
        </authorList>
    </citation>
    <scope>PHOSPHORYLATION [LARGE SCALE ANALYSIS] AT SER-417 AND SER-634</scope>
    <scope>IDENTIFICATION BY MASS SPECTROMETRY [LARGE SCALE ANALYSIS]</scope>
</reference>
<reference key="18">
    <citation type="journal article" date="2009" name="Science">
        <title>Global analysis of Cdk1 substrate phosphorylation sites provides insights into evolution.</title>
        <authorList>
            <person name="Holt L.J."/>
            <person name="Tuch B.B."/>
            <person name="Villen J."/>
            <person name="Johnson A.D."/>
            <person name="Gygi S.P."/>
            <person name="Morgan D.O."/>
        </authorList>
    </citation>
    <scope>PHOSPHORYLATION [LARGE SCALE ANALYSIS] AT SER-417</scope>
    <scope>IDENTIFICATION BY MASS SPECTROMETRY [LARGE SCALE ANALYSIS]</scope>
</reference>
<gene>
    <name type="primary">SGV1</name>
    <name type="synonym">BUR1</name>
    <name type="ordered locus">YPR161C</name>
    <name type="ORF">P9584.8</name>
</gene>
<dbReference type="EC" id="2.7.11.22" evidence="5 15"/>
<dbReference type="EC" id="2.7.11.23" evidence="5"/>
<dbReference type="EMBL" id="D90317">
    <property type="protein sequence ID" value="BAA14347.1"/>
    <property type="molecule type" value="Genomic_DNA"/>
</dbReference>
<dbReference type="EMBL" id="L33835">
    <property type="protein sequence ID" value="AAB59314.1"/>
    <property type="molecule type" value="Genomic_DNA"/>
</dbReference>
<dbReference type="EMBL" id="U28371">
    <property type="protein sequence ID" value="AAB68058.1"/>
    <property type="molecule type" value="Genomic_DNA"/>
</dbReference>
<dbReference type="EMBL" id="BK006949">
    <property type="protein sequence ID" value="DAA11578.1"/>
    <property type="molecule type" value="Genomic_DNA"/>
</dbReference>
<dbReference type="PIR" id="A39526">
    <property type="entry name" value="A39526"/>
</dbReference>
<dbReference type="RefSeq" id="NP_015487.1">
    <property type="nucleotide sequence ID" value="NM_001184258.1"/>
</dbReference>
<dbReference type="SMR" id="P23293"/>
<dbReference type="BioGRID" id="36334">
    <property type="interactions" value="1143"/>
</dbReference>
<dbReference type="ComplexPortal" id="CPX-1685">
    <property type="entry name" value="BUR1-BUR2 kinase complex"/>
</dbReference>
<dbReference type="DIP" id="DIP-5916N"/>
<dbReference type="FunCoup" id="P23293">
    <property type="interactions" value="387"/>
</dbReference>
<dbReference type="IntAct" id="P23293">
    <property type="interactions" value="15"/>
</dbReference>
<dbReference type="MINT" id="P23293"/>
<dbReference type="STRING" id="4932.YPR161C"/>
<dbReference type="iPTMnet" id="P23293"/>
<dbReference type="PaxDb" id="4932-YPR161C"/>
<dbReference type="PeptideAtlas" id="P23293"/>
<dbReference type="EnsemblFungi" id="YPR161C_mRNA">
    <property type="protein sequence ID" value="YPR161C"/>
    <property type="gene ID" value="YPR161C"/>
</dbReference>
<dbReference type="GeneID" id="856290"/>
<dbReference type="KEGG" id="sce:YPR161C"/>
<dbReference type="AGR" id="SGD:S000006365"/>
<dbReference type="SGD" id="S000006365">
    <property type="gene designation" value="SGV1"/>
</dbReference>
<dbReference type="VEuPathDB" id="FungiDB:YPR161C"/>
<dbReference type="eggNOG" id="KOG0600">
    <property type="taxonomic scope" value="Eukaryota"/>
</dbReference>
<dbReference type="GeneTree" id="ENSGT00940000155373"/>
<dbReference type="HOGENOM" id="CLU_000288_167_0_1"/>
<dbReference type="InParanoid" id="P23293"/>
<dbReference type="OMA" id="PRINLEM"/>
<dbReference type="OrthoDB" id="28397at2759"/>
<dbReference type="BioCyc" id="YEAST:G3O-34290-MONOMER"/>
<dbReference type="BRENDA" id="2.7.11.22">
    <property type="organism ID" value="984"/>
</dbReference>
<dbReference type="BRENDA" id="2.7.11.23">
    <property type="organism ID" value="984"/>
</dbReference>
<dbReference type="Reactome" id="R-SCE-6796648">
    <property type="pathway name" value="TP53 Regulates Transcription of DNA Repair Genes"/>
</dbReference>
<dbReference type="Reactome" id="R-SCE-6798695">
    <property type="pathway name" value="Neutrophil degranulation"/>
</dbReference>
<dbReference type="BioGRID-ORCS" id="856290">
    <property type="hits" value="1 hit in 13 CRISPR screens"/>
</dbReference>
<dbReference type="PRO" id="PR:P23293"/>
<dbReference type="Proteomes" id="UP000002311">
    <property type="component" value="Chromosome XVI"/>
</dbReference>
<dbReference type="RNAct" id="P23293">
    <property type="molecule type" value="protein"/>
</dbReference>
<dbReference type="GO" id="GO:0000307">
    <property type="term" value="C:cyclin-dependent protein kinase holoenzyme complex"/>
    <property type="evidence" value="ECO:0000353"/>
    <property type="project" value="ComplexPortal"/>
</dbReference>
<dbReference type="GO" id="GO:0005634">
    <property type="term" value="C:nucleus"/>
    <property type="evidence" value="ECO:0000314"/>
    <property type="project" value="SGD"/>
</dbReference>
<dbReference type="GO" id="GO:0005524">
    <property type="term" value="F:ATP binding"/>
    <property type="evidence" value="ECO:0007669"/>
    <property type="project" value="UniProtKB-KW"/>
</dbReference>
<dbReference type="GO" id="GO:0004693">
    <property type="term" value="F:cyclin-dependent protein serine/threonine kinase activity"/>
    <property type="evidence" value="ECO:0000314"/>
    <property type="project" value="SGD"/>
</dbReference>
<dbReference type="GO" id="GO:0106310">
    <property type="term" value="F:protein serine kinase activity"/>
    <property type="evidence" value="ECO:0007669"/>
    <property type="project" value="RHEA"/>
</dbReference>
<dbReference type="GO" id="GO:0008353">
    <property type="term" value="F:RNA polymerase II CTD heptapeptide repeat kinase activity"/>
    <property type="evidence" value="ECO:0000314"/>
    <property type="project" value="SGD"/>
</dbReference>
<dbReference type="GO" id="GO:0006351">
    <property type="term" value="P:DNA-templated transcription"/>
    <property type="evidence" value="ECO:0000314"/>
    <property type="project" value="ComplexPortal"/>
</dbReference>
<dbReference type="GO" id="GO:0032968">
    <property type="term" value="P:positive regulation of transcription elongation by RNA polymerase II"/>
    <property type="evidence" value="ECO:0000315"/>
    <property type="project" value="SGD"/>
</dbReference>
<dbReference type="GO" id="GO:0006368">
    <property type="term" value="P:transcription elongation by RNA polymerase II"/>
    <property type="evidence" value="ECO:0000314"/>
    <property type="project" value="SGD"/>
</dbReference>
<dbReference type="CDD" id="cd07866">
    <property type="entry name" value="STKc_BUR1"/>
    <property type="match status" value="1"/>
</dbReference>
<dbReference type="FunFam" id="3.30.200.20:FF:000477">
    <property type="entry name" value="Cyclin dependent kinase C, putative"/>
    <property type="match status" value="1"/>
</dbReference>
<dbReference type="FunFam" id="1.10.510.10:FF:000963">
    <property type="entry name" value="Serine/threonine-protein kinase BUR1"/>
    <property type="match status" value="1"/>
</dbReference>
<dbReference type="Gene3D" id="3.30.200.20">
    <property type="entry name" value="Phosphorylase Kinase, domain 1"/>
    <property type="match status" value="1"/>
</dbReference>
<dbReference type="Gene3D" id="1.10.510.10">
    <property type="entry name" value="Transferase(Phosphotransferase) domain 1"/>
    <property type="match status" value="1"/>
</dbReference>
<dbReference type="InterPro" id="IPR050108">
    <property type="entry name" value="CDK"/>
</dbReference>
<dbReference type="InterPro" id="IPR011009">
    <property type="entry name" value="Kinase-like_dom_sf"/>
</dbReference>
<dbReference type="InterPro" id="IPR000719">
    <property type="entry name" value="Prot_kinase_dom"/>
</dbReference>
<dbReference type="InterPro" id="IPR017441">
    <property type="entry name" value="Protein_kinase_ATP_BS"/>
</dbReference>
<dbReference type="InterPro" id="IPR008271">
    <property type="entry name" value="Ser/Thr_kinase_AS"/>
</dbReference>
<dbReference type="PANTHER" id="PTHR24056">
    <property type="entry name" value="CELL DIVISION PROTEIN KINASE"/>
    <property type="match status" value="1"/>
</dbReference>
<dbReference type="PANTHER" id="PTHR24056:SF233">
    <property type="entry name" value="CYCLIN-DEPENDENT KINASE 9"/>
    <property type="match status" value="1"/>
</dbReference>
<dbReference type="Pfam" id="PF00069">
    <property type="entry name" value="Pkinase"/>
    <property type="match status" value="1"/>
</dbReference>
<dbReference type="SMART" id="SM00220">
    <property type="entry name" value="S_TKc"/>
    <property type="match status" value="1"/>
</dbReference>
<dbReference type="SUPFAM" id="SSF56112">
    <property type="entry name" value="Protein kinase-like (PK-like)"/>
    <property type="match status" value="1"/>
</dbReference>
<dbReference type="PROSITE" id="PS00107">
    <property type="entry name" value="PROTEIN_KINASE_ATP"/>
    <property type="match status" value="1"/>
</dbReference>
<dbReference type="PROSITE" id="PS50011">
    <property type="entry name" value="PROTEIN_KINASE_DOM"/>
    <property type="match status" value="1"/>
</dbReference>
<dbReference type="PROSITE" id="PS00108">
    <property type="entry name" value="PROTEIN_KINASE_ST"/>
    <property type="match status" value="1"/>
</dbReference>
<protein>
    <recommendedName>
        <fullName>Serine/threonine-protein kinase BUR1</fullName>
        <ecNumber evidence="5 15">2.7.11.22</ecNumber>
        <ecNumber evidence="5">2.7.11.23</ecNumber>
    </recommendedName>
    <alternativeName>
        <fullName>Bypass UAS requirement protein 1</fullName>
    </alternativeName>
    <alternativeName>
        <fullName>Suppressor of GPA1-Vall50 mutation protein 1</fullName>
    </alternativeName>
</protein>
<keyword id="KW-0067">ATP-binding</keyword>
<keyword id="KW-0418">Kinase</keyword>
<keyword id="KW-0547">Nucleotide-binding</keyword>
<keyword id="KW-0539">Nucleus</keyword>
<keyword id="KW-0597">Phosphoprotein</keyword>
<keyword id="KW-1185">Reference proteome</keyword>
<keyword id="KW-0723">Serine/threonine-protein kinase</keyword>
<keyword id="KW-0808">Transferase</keyword>
<feature type="chain" id="PRO_0000085687" description="Serine/threonine-protein kinase BUR1">
    <location>
        <begin position="1"/>
        <end position="657"/>
    </location>
</feature>
<feature type="domain" description="Protein kinase" evidence="1">
    <location>
        <begin position="60"/>
        <end position="366"/>
    </location>
</feature>
<feature type="region of interest" description="Disordered" evidence="3">
    <location>
        <begin position="414"/>
        <end position="657"/>
    </location>
</feature>
<feature type="compositionally biased region" description="Low complexity" evidence="3">
    <location>
        <begin position="489"/>
        <end position="501"/>
    </location>
</feature>
<feature type="compositionally biased region" description="Polar residues" evidence="3">
    <location>
        <begin position="535"/>
        <end position="552"/>
    </location>
</feature>
<feature type="compositionally biased region" description="Polar residues" evidence="3">
    <location>
        <begin position="564"/>
        <end position="595"/>
    </location>
</feature>
<feature type="compositionally biased region" description="Polar residues" evidence="3">
    <location>
        <begin position="614"/>
        <end position="625"/>
    </location>
</feature>
<feature type="compositionally biased region" description="Basic and acidic residues" evidence="3">
    <location>
        <begin position="627"/>
        <end position="649"/>
    </location>
</feature>
<feature type="active site" description="Proton acceptor" evidence="1 2">
    <location>
        <position position="195"/>
    </location>
</feature>
<feature type="binding site" evidence="1">
    <location>
        <begin position="66"/>
        <end position="74"/>
    </location>
    <ligand>
        <name>ATP</name>
        <dbReference type="ChEBI" id="CHEBI:30616"/>
    </ligand>
</feature>
<feature type="binding site" evidence="1">
    <location>
        <position position="89"/>
    </location>
    <ligand>
        <name>ATP</name>
        <dbReference type="ChEBI" id="CHEBI:30616"/>
    </ligand>
</feature>
<feature type="modified residue" description="Phosphothreonine; by CAK" evidence="6">
    <location>
        <position position="240"/>
    </location>
</feature>
<feature type="modified residue" description="Phosphoserine" evidence="17">
    <location>
        <position position="400"/>
    </location>
</feature>
<feature type="modified residue" description="Phosphothreonine" evidence="17">
    <location>
        <position position="405"/>
    </location>
</feature>
<feature type="modified residue" description="Phosphoserine" evidence="18 19 20">
    <location>
        <position position="417"/>
    </location>
</feature>
<feature type="modified residue" description="Phosphoserine" evidence="19">
    <location>
        <position position="634"/>
    </location>
</feature>
<feature type="mutagenesis site" description="Loss of kinase activity in vitro." evidence="7">
    <original>E</original>
    <variation>Q</variation>
    <location>
        <position position="107"/>
    </location>
</feature>
<feature type="mutagenesis site" description="Loss of kinase activity in vitro." evidence="7">
    <original>D</original>
    <variation>N</variation>
    <location>
        <position position="213"/>
    </location>
</feature>
<feature type="mutagenesis site" description="No phosphorylation of SGV1." evidence="6 7">
    <original>T</original>
    <variation>A</variation>
    <variation>D</variation>
    <variation>E</variation>
    <location>
        <position position="240"/>
    </location>
</feature>